<protein>
    <recommendedName>
        <fullName>Alpha-glucosidase</fullName>
        <ecNumber>3.2.1.20</ecNumber>
    </recommendedName>
    <alternativeName>
        <fullName>Maltase</fullName>
    </alternativeName>
</protein>
<feature type="chain" id="PRO_0000185367" description="Alpha-glucosidase">
    <location>
        <begin position="1"/>
        <end position="693"/>
    </location>
</feature>
<feature type="active site" evidence="1">
    <location>
        <position position="320"/>
    </location>
</feature>
<feature type="active site" evidence="1">
    <location>
        <position position="323"/>
    </location>
</feature>
<feature type="active site" description="Proton donor" evidence="1">
    <location>
        <position position="416"/>
    </location>
</feature>
<feature type="strand" evidence="3">
    <location>
        <begin position="5"/>
        <end position="8"/>
    </location>
</feature>
<feature type="strand" evidence="3">
    <location>
        <begin position="10"/>
        <end position="19"/>
    </location>
</feature>
<feature type="helix" evidence="3">
    <location>
        <begin position="38"/>
        <end position="41"/>
    </location>
</feature>
<feature type="strand" evidence="3">
    <location>
        <begin position="43"/>
        <end position="48"/>
    </location>
</feature>
<feature type="strand" evidence="3">
    <location>
        <begin position="51"/>
        <end position="57"/>
    </location>
</feature>
<feature type="strand" evidence="3">
    <location>
        <begin position="63"/>
        <end position="66"/>
    </location>
</feature>
<feature type="strand" evidence="3">
    <location>
        <begin position="78"/>
        <end position="83"/>
    </location>
</feature>
<feature type="strand" evidence="3">
    <location>
        <begin position="99"/>
        <end position="101"/>
    </location>
</feature>
<feature type="strand" evidence="3">
    <location>
        <begin position="104"/>
        <end position="109"/>
    </location>
</feature>
<feature type="strand" evidence="3">
    <location>
        <begin position="112"/>
        <end position="118"/>
    </location>
</feature>
<feature type="strand" evidence="3">
    <location>
        <begin position="124"/>
        <end position="132"/>
    </location>
</feature>
<feature type="strand" evidence="3">
    <location>
        <begin position="135"/>
        <end position="143"/>
    </location>
</feature>
<feature type="strand" evidence="3">
    <location>
        <begin position="145"/>
        <end position="151"/>
    </location>
</feature>
<feature type="helix" evidence="3">
    <location>
        <begin position="155"/>
        <end position="166"/>
    </location>
</feature>
<feature type="helix" evidence="3">
    <location>
        <begin position="174"/>
        <end position="177"/>
    </location>
</feature>
<feature type="strand" evidence="3">
    <location>
        <begin position="178"/>
        <end position="182"/>
    </location>
</feature>
<feature type="helix" evidence="3">
    <location>
        <begin position="189"/>
        <end position="201"/>
    </location>
</feature>
<feature type="strand" evidence="3">
    <location>
        <begin position="206"/>
        <end position="211"/>
    </location>
</feature>
<feature type="helix" evidence="3">
    <location>
        <begin position="213"/>
        <end position="215"/>
    </location>
</feature>
<feature type="turn" evidence="3">
    <location>
        <begin position="226"/>
        <end position="228"/>
    </location>
</feature>
<feature type="helix" evidence="3">
    <location>
        <begin position="232"/>
        <end position="241"/>
    </location>
</feature>
<feature type="strand" evidence="3">
    <location>
        <begin position="245"/>
        <end position="250"/>
    </location>
</feature>
<feature type="helix" evidence="3">
    <location>
        <begin position="261"/>
        <end position="266"/>
    </location>
</feature>
<feature type="strand" evidence="3">
    <location>
        <begin position="276"/>
        <end position="278"/>
    </location>
</feature>
<feature type="strand" evidence="3">
    <location>
        <begin position="280"/>
        <end position="283"/>
    </location>
</feature>
<feature type="strand" evidence="3">
    <location>
        <begin position="286"/>
        <end position="289"/>
    </location>
</feature>
<feature type="helix" evidence="3">
    <location>
        <begin position="296"/>
        <end position="310"/>
    </location>
</feature>
<feature type="turn" evidence="3">
    <location>
        <begin position="311"/>
        <end position="313"/>
    </location>
</feature>
<feature type="strand" evidence="3">
    <location>
        <begin position="316"/>
        <end position="319"/>
    </location>
</feature>
<feature type="turn" evidence="3">
    <location>
        <begin position="322"/>
        <end position="324"/>
    </location>
</feature>
<feature type="helix" evidence="3">
    <location>
        <begin position="328"/>
        <end position="337"/>
    </location>
</feature>
<feature type="helix" evidence="3">
    <location>
        <begin position="348"/>
        <end position="351"/>
    </location>
</feature>
<feature type="strand" evidence="3">
    <location>
        <begin position="357"/>
        <end position="361"/>
    </location>
</feature>
<feature type="strand" evidence="3">
    <location>
        <begin position="364"/>
        <end position="367"/>
    </location>
</feature>
<feature type="helix" evidence="3">
    <location>
        <begin position="368"/>
        <end position="371"/>
    </location>
</feature>
<feature type="helix" evidence="3">
    <location>
        <begin position="372"/>
        <end position="374"/>
    </location>
</feature>
<feature type="helix" evidence="3">
    <location>
        <begin position="375"/>
        <end position="389"/>
    </location>
</feature>
<feature type="strand" evidence="3">
    <location>
        <begin position="397"/>
        <end position="400"/>
    </location>
</feature>
<feature type="helix" evidence="3">
    <location>
        <begin position="406"/>
        <end position="408"/>
    </location>
</feature>
<feature type="strand" evidence="3">
    <location>
        <begin position="411"/>
        <end position="413"/>
    </location>
</feature>
<feature type="helix" evidence="3">
    <location>
        <begin position="421"/>
        <end position="435"/>
    </location>
</feature>
<feature type="turn" evidence="3">
    <location>
        <begin position="436"/>
        <end position="438"/>
    </location>
</feature>
<feature type="strand" evidence="3">
    <location>
        <begin position="441"/>
        <end position="443"/>
    </location>
</feature>
<feature type="strand" evidence="3">
    <location>
        <begin position="452"/>
        <end position="455"/>
    </location>
</feature>
<feature type="helix" evidence="3">
    <location>
        <begin position="461"/>
        <end position="470"/>
    </location>
</feature>
<feature type="turn" evidence="3">
    <location>
        <begin position="471"/>
        <end position="473"/>
    </location>
</feature>
<feature type="strand" evidence="3">
    <location>
        <begin position="477"/>
        <end position="479"/>
    </location>
</feature>
<feature type="helix" evidence="3">
    <location>
        <begin position="490"/>
        <end position="492"/>
    </location>
</feature>
<feature type="helix" evidence="3">
    <location>
        <begin position="495"/>
        <end position="525"/>
    </location>
</feature>
<feature type="strand" evidence="3">
    <location>
        <begin position="529"/>
        <end position="531"/>
    </location>
</feature>
<feature type="helix" evidence="3">
    <location>
        <begin position="533"/>
        <end position="536"/>
    </location>
</feature>
<feature type="helix" evidence="3">
    <location>
        <begin position="541"/>
        <end position="545"/>
    </location>
</feature>
<feature type="strand" evidence="3">
    <location>
        <begin position="550"/>
        <end position="552"/>
    </location>
</feature>
<feature type="turn" evidence="3">
    <location>
        <begin position="553"/>
        <end position="555"/>
    </location>
</feature>
<feature type="strand" evidence="3">
    <location>
        <begin position="556"/>
        <end position="558"/>
    </location>
</feature>
<feature type="strand" evidence="3">
    <location>
        <begin position="563"/>
        <end position="567"/>
    </location>
</feature>
<feature type="strand" evidence="3">
    <location>
        <begin position="569"/>
        <end position="572"/>
    </location>
</feature>
<feature type="strand" evidence="3">
    <location>
        <begin position="574"/>
        <end position="579"/>
    </location>
</feature>
<feature type="turn" evidence="3">
    <location>
        <begin position="580"/>
        <end position="582"/>
    </location>
</feature>
<feature type="strand" evidence="3">
    <location>
        <begin position="585"/>
        <end position="593"/>
    </location>
</feature>
<feature type="strand" evidence="3">
    <location>
        <begin position="596"/>
        <end position="598"/>
    </location>
</feature>
<feature type="strand" evidence="3">
    <location>
        <begin position="600"/>
        <end position="610"/>
    </location>
</feature>
<feature type="helix" evidence="3">
    <location>
        <begin position="611"/>
        <end position="613"/>
    </location>
</feature>
<feature type="strand" evidence="3">
    <location>
        <begin position="614"/>
        <end position="624"/>
    </location>
</feature>
<feature type="strand" evidence="3">
    <location>
        <begin position="630"/>
        <end position="633"/>
    </location>
</feature>
<feature type="strand" evidence="3">
    <location>
        <begin position="635"/>
        <end position="642"/>
    </location>
</feature>
<feature type="strand" evidence="3">
    <location>
        <begin position="644"/>
        <end position="652"/>
    </location>
</feature>
<feature type="strand" evidence="3">
    <location>
        <begin position="659"/>
        <end position="662"/>
    </location>
</feature>
<feature type="strand" evidence="3">
    <location>
        <begin position="667"/>
        <end position="669"/>
    </location>
</feature>
<feature type="strand" evidence="3">
    <location>
        <begin position="671"/>
        <end position="674"/>
    </location>
</feature>
<feature type="strand" evidence="3">
    <location>
        <begin position="677"/>
        <end position="693"/>
    </location>
</feature>
<gene>
    <name type="primary">malA</name>
    <name type="ordered locus">SSO3051</name>
    <name type="ORF">C23_036</name>
</gene>
<proteinExistence type="evidence at protein level"/>
<organism>
    <name type="scientific">Saccharolobus solfataricus (strain ATCC 35092 / DSM 1617 / JCM 11322 / P2)</name>
    <name type="common">Sulfolobus solfataricus</name>
    <dbReference type="NCBI Taxonomy" id="273057"/>
    <lineage>
        <taxon>Archaea</taxon>
        <taxon>Thermoproteota</taxon>
        <taxon>Thermoprotei</taxon>
        <taxon>Sulfolobales</taxon>
        <taxon>Sulfolobaceae</taxon>
        <taxon>Saccharolobus</taxon>
    </lineage>
</organism>
<accession>P0CD66</accession>
<accession>O59645</accession>
<reference key="1">
    <citation type="journal article" date="2001" name="Proc. Natl. Acad. Sci. U.S.A.">
        <title>The complete genome of the crenarchaeon Sulfolobus solfataricus P2.</title>
        <authorList>
            <person name="She Q."/>
            <person name="Singh R.K."/>
            <person name="Confalonieri F."/>
            <person name="Zivanovic Y."/>
            <person name="Allard G."/>
            <person name="Awayez M.J."/>
            <person name="Chan-Weiher C.C.-Y."/>
            <person name="Clausen I.G."/>
            <person name="Curtis B.A."/>
            <person name="De Moors A."/>
            <person name="Erauso G."/>
            <person name="Fletcher C."/>
            <person name="Gordon P.M.K."/>
            <person name="Heikamp-de Jong I."/>
            <person name="Jeffries A.C."/>
            <person name="Kozera C.J."/>
            <person name="Medina N."/>
            <person name="Peng X."/>
            <person name="Thi-Ngoc H.P."/>
            <person name="Redder P."/>
            <person name="Schenk M.E."/>
            <person name="Theriault C."/>
            <person name="Tolstrup N."/>
            <person name="Charlebois R.L."/>
            <person name="Doolittle W.F."/>
            <person name="Duguet M."/>
            <person name="Gaasterland T."/>
            <person name="Garrett R.A."/>
            <person name="Ragan M.A."/>
            <person name="Sensen C.W."/>
            <person name="Van der Oost J."/>
        </authorList>
    </citation>
    <scope>NUCLEOTIDE SEQUENCE [LARGE SCALE GENOMIC DNA]</scope>
    <source>
        <strain>ATCC 35092 / DSM 1617 / JCM 11322 / P2</strain>
    </source>
</reference>
<keyword id="KW-0002">3D-structure</keyword>
<keyword id="KW-0963">Cytoplasm</keyword>
<keyword id="KW-0326">Glycosidase</keyword>
<keyword id="KW-0378">Hydrolase</keyword>
<keyword id="KW-1185">Reference proteome</keyword>
<evidence type="ECO:0000250" key="1"/>
<evidence type="ECO:0000305" key="2"/>
<evidence type="ECO:0007829" key="3">
    <source>
        <dbReference type="PDB" id="2G3M"/>
    </source>
</evidence>
<dbReference type="EC" id="3.2.1.20"/>
<dbReference type="EMBL" id="AE006641">
    <property type="protein sequence ID" value="AAK43151.1"/>
    <property type="molecule type" value="Genomic_DNA"/>
</dbReference>
<dbReference type="PIR" id="H90486">
    <property type="entry name" value="H90486"/>
</dbReference>
<dbReference type="RefSeq" id="WP_009988431.1">
    <property type="nucleotide sequence ID" value="NC_002754.1"/>
</dbReference>
<dbReference type="PDB" id="2G3M">
    <property type="method" value="X-ray"/>
    <property type="resolution" value="2.55 A"/>
    <property type="chains" value="A/B/C/D/E/F=5-693"/>
</dbReference>
<dbReference type="PDB" id="2G3N">
    <property type="method" value="X-ray"/>
    <property type="resolution" value="2.55 A"/>
    <property type="chains" value="A/B/C/D/E/F=5-693"/>
</dbReference>
<dbReference type="PDBsum" id="2G3M"/>
<dbReference type="PDBsum" id="2G3N"/>
<dbReference type="SMR" id="P0CD66"/>
<dbReference type="FunCoup" id="P0CD66">
    <property type="interactions" value="246"/>
</dbReference>
<dbReference type="STRING" id="273057.SSO3051"/>
<dbReference type="CAZy" id="GH31">
    <property type="family name" value="Glycoside Hydrolase Family 31"/>
</dbReference>
<dbReference type="PaxDb" id="273057-SSO3051"/>
<dbReference type="EnsemblBacteria" id="AAK43151">
    <property type="protein sequence ID" value="AAK43151"/>
    <property type="gene ID" value="SSO3051"/>
</dbReference>
<dbReference type="GeneID" id="44128770"/>
<dbReference type="KEGG" id="sso:SSO3051"/>
<dbReference type="PATRIC" id="fig|273057.12.peg.3149"/>
<dbReference type="eggNOG" id="arCOG03663">
    <property type="taxonomic scope" value="Archaea"/>
</dbReference>
<dbReference type="HOGENOM" id="CLU_000631_7_2_2"/>
<dbReference type="InParanoid" id="P0CD66"/>
<dbReference type="PhylomeDB" id="P0CD66"/>
<dbReference type="BRENDA" id="3.2.1.20">
    <property type="organism ID" value="6163"/>
</dbReference>
<dbReference type="EvolutionaryTrace" id="P0CD66"/>
<dbReference type="Proteomes" id="UP000001974">
    <property type="component" value="Chromosome"/>
</dbReference>
<dbReference type="GO" id="GO:0005737">
    <property type="term" value="C:cytoplasm"/>
    <property type="evidence" value="ECO:0007669"/>
    <property type="project" value="UniProtKB-SubCell"/>
</dbReference>
<dbReference type="GO" id="GO:0004558">
    <property type="term" value="F:alpha-1,4-glucosidase activity"/>
    <property type="evidence" value="ECO:0007669"/>
    <property type="project" value="UniProtKB-EC"/>
</dbReference>
<dbReference type="GO" id="GO:0030246">
    <property type="term" value="F:carbohydrate binding"/>
    <property type="evidence" value="ECO:0007669"/>
    <property type="project" value="InterPro"/>
</dbReference>
<dbReference type="GO" id="GO:0004553">
    <property type="term" value="F:hydrolase activity, hydrolyzing O-glycosyl compounds"/>
    <property type="evidence" value="ECO:0000318"/>
    <property type="project" value="GO_Central"/>
</dbReference>
<dbReference type="GO" id="GO:0005975">
    <property type="term" value="P:carbohydrate metabolic process"/>
    <property type="evidence" value="ECO:0007669"/>
    <property type="project" value="InterPro"/>
</dbReference>
<dbReference type="CDD" id="cd06604">
    <property type="entry name" value="GH31_glucosidase_II_MalA"/>
    <property type="match status" value="1"/>
</dbReference>
<dbReference type="CDD" id="cd14752">
    <property type="entry name" value="GH31_N"/>
    <property type="match status" value="1"/>
</dbReference>
<dbReference type="Gene3D" id="3.20.20.80">
    <property type="entry name" value="Glycosidases"/>
    <property type="match status" value="1"/>
</dbReference>
<dbReference type="Gene3D" id="2.60.40.1760">
    <property type="entry name" value="glycosyl hydrolase (family 31)"/>
    <property type="match status" value="1"/>
</dbReference>
<dbReference type="Gene3D" id="2.60.40.1180">
    <property type="entry name" value="Golgi alpha-mannosidase II"/>
    <property type="match status" value="2"/>
</dbReference>
<dbReference type="InterPro" id="IPR011013">
    <property type="entry name" value="Gal_mutarotase_sf_dom"/>
</dbReference>
<dbReference type="InterPro" id="IPR053497">
    <property type="entry name" value="GH31_Enzymes"/>
</dbReference>
<dbReference type="InterPro" id="IPR030458">
    <property type="entry name" value="Glyco_hydro_31_AS"/>
</dbReference>
<dbReference type="InterPro" id="IPR048395">
    <property type="entry name" value="Glyco_hydro_31_C"/>
</dbReference>
<dbReference type="InterPro" id="IPR025887">
    <property type="entry name" value="Glyco_hydro_31_N_dom"/>
</dbReference>
<dbReference type="InterPro" id="IPR000322">
    <property type="entry name" value="Glyco_hydro_31_TIM"/>
</dbReference>
<dbReference type="InterPro" id="IPR013780">
    <property type="entry name" value="Glyco_hydro_b"/>
</dbReference>
<dbReference type="InterPro" id="IPR017853">
    <property type="entry name" value="Glycoside_hydrolase_SF"/>
</dbReference>
<dbReference type="NCBIfam" id="NF040948">
    <property type="entry name" value="alpha_gluc_MalA"/>
    <property type="match status" value="1"/>
</dbReference>
<dbReference type="PANTHER" id="PTHR22762">
    <property type="entry name" value="ALPHA-GLUCOSIDASE"/>
    <property type="match status" value="1"/>
</dbReference>
<dbReference type="PANTHER" id="PTHR22762:SF120">
    <property type="entry name" value="HETEROGLYCAN GLUCOSIDASE 1"/>
    <property type="match status" value="1"/>
</dbReference>
<dbReference type="Pfam" id="PF13802">
    <property type="entry name" value="Gal_mutarotas_2"/>
    <property type="match status" value="1"/>
</dbReference>
<dbReference type="Pfam" id="PF01055">
    <property type="entry name" value="Glyco_hydro_31_2nd"/>
    <property type="match status" value="1"/>
</dbReference>
<dbReference type="Pfam" id="PF21365">
    <property type="entry name" value="Glyco_hydro_31_3rd"/>
    <property type="match status" value="1"/>
</dbReference>
<dbReference type="SUPFAM" id="SSF51445">
    <property type="entry name" value="(Trans)glycosidases"/>
    <property type="match status" value="1"/>
</dbReference>
<dbReference type="SUPFAM" id="SSF74650">
    <property type="entry name" value="Galactose mutarotase-like"/>
    <property type="match status" value="1"/>
</dbReference>
<dbReference type="SUPFAM" id="SSF51011">
    <property type="entry name" value="Glycosyl hydrolase domain"/>
    <property type="match status" value="1"/>
</dbReference>
<dbReference type="PROSITE" id="PS00129">
    <property type="entry name" value="GLYCOSYL_HYDROL_F31_1"/>
    <property type="match status" value="1"/>
</dbReference>
<sequence>MQTIKIYENKGVYKVVIGEPFPPIEFPLEQKISSNKSLSELGLTIVQQGNKVIVEKSLDLKEHIIGLGEKAFELDRKRKRYVMYNVDAGAYKKYQDPLYVSIPLFISVKDGVATGYFFNSASKVIFDVGLEEYDKVIVTIPEDSVEFYVIEGPRIEDVLEKYTELTGKPFLPPMWAFGYMISRYSYYPQDKVVELVDIMQKEGFRVAGVFLDIHYMDSYKLFTWHPYRFPEPKKLIDELHKRNVKLITIVDHGIRVDQNYSPFLSGMGKFCEIESGELFVGKMWPGTTVYPDFFREDTREWWAGLISEWLSQGVDGIWLDMNEPTDFSRAIEIRDVLSSLPVQFRDDRLVTTFPDNVVHYLRGKRVKHEKVRNAYPLYEAMATFKGFRTSHRNEIFILSRAGYAGIQRYAFIWTGDNTPSWDDLKLQLQLVLGLSISGVPFVGCDIGGFQGRNFAEIDNSMDLLVKYYALALFFPFYRSHKATDGIDTEPVFLPDYYKEKVKEIVELRYKFLPYIYSLALEASEKGHPVIRPLFYEFQDDDDMYRIEDEYMVGKYLLYAPIVSKEESRLVTLPRGKWYNYWNGEIINGKSVVKSTHELPIYLREGSIIPLEGDELIVYGETSFKRYDNAEITSSSNEIKFSREIYVSKLTITSEKPVSKIIVDDSKEIQVEKTMQNTYVAKINQKIRGKINLE</sequence>
<comment type="function">
    <text evidence="1">Major soluble alpha-glucosidase.</text>
</comment>
<comment type="catalytic activity">
    <reaction>
        <text>Hydrolysis of terminal, non-reducing (1-&gt;4)-linked alpha-D-glucose residues with release of alpha-D-glucose.</text>
        <dbReference type="EC" id="3.2.1.20"/>
    </reaction>
</comment>
<comment type="subcellular location">
    <subcellularLocation>
        <location evidence="1">Cytoplasm</location>
    </subcellularLocation>
</comment>
<comment type="similarity">
    <text evidence="2">Belongs to the glycosyl hydrolase 31 family.</text>
</comment>
<name>AGLU_SACS2</name>